<proteinExistence type="inferred from homology"/>
<comment type="function">
    <text evidence="1">Catalytic subunit of the periplasmic nitrate reductase complex NapAB. Receives electrons from NapB and catalyzes the reduction of nitrate to nitrite.</text>
</comment>
<comment type="catalytic activity">
    <reaction evidence="1">
        <text>2 Fe(II)-[cytochrome] + nitrate + 2 H(+) = 2 Fe(III)-[cytochrome] + nitrite + H2O</text>
        <dbReference type="Rhea" id="RHEA:12909"/>
        <dbReference type="Rhea" id="RHEA-COMP:11777"/>
        <dbReference type="Rhea" id="RHEA-COMP:11778"/>
        <dbReference type="ChEBI" id="CHEBI:15377"/>
        <dbReference type="ChEBI" id="CHEBI:15378"/>
        <dbReference type="ChEBI" id="CHEBI:16301"/>
        <dbReference type="ChEBI" id="CHEBI:17632"/>
        <dbReference type="ChEBI" id="CHEBI:29033"/>
        <dbReference type="ChEBI" id="CHEBI:29034"/>
        <dbReference type="EC" id="1.9.6.1"/>
    </reaction>
</comment>
<comment type="cofactor">
    <cofactor evidence="1">
        <name>[4Fe-4S] cluster</name>
        <dbReference type="ChEBI" id="CHEBI:49883"/>
    </cofactor>
    <text evidence="1">Binds 1 [4Fe-4S] cluster.</text>
</comment>
<comment type="cofactor">
    <cofactor evidence="1">
        <name>Mo-bis(molybdopterin guanine dinucleotide)</name>
        <dbReference type="ChEBI" id="CHEBI:60539"/>
    </cofactor>
    <text evidence="1">Binds 1 molybdenum-bis(molybdopterin guanine dinucleotide) (Mo-bis-MGD) cofactor per subunit.</text>
</comment>
<comment type="subunit">
    <text evidence="1">Component of the periplasmic nitrate reductase NapAB complex composed of NapA and NapB.</text>
</comment>
<comment type="subcellular location">
    <subcellularLocation>
        <location evidence="1">Periplasm</location>
    </subcellularLocation>
</comment>
<comment type="PTM">
    <text evidence="1">Predicted to be exported by the Tat system. The position of the signal peptide cleavage has not been experimentally proven.</text>
</comment>
<comment type="similarity">
    <text evidence="1">Belongs to the prokaryotic molybdopterin-containing oxidoreductase family. NasA/NapA/NarB subfamily.</text>
</comment>
<keyword id="KW-0004">4Fe-4S</keyword>
<keyword id="KW-0249">Electron transport</keyword>
<keyword id="KW-0408">Iron</keyword>
<keyword id="KW-0411">Iron-sulfur</keyword>
<keyword id="KW-0479">Metal-binding</keyword>
<keyword id="KW-0500">Molybdenum</keyword>
<keyword id="KW-0534">Nitrate assimilation</keyword>
<keyword id="KW-0560">Oxidoreductase</keyword>
<keyword id="KW-0574">Periplasm</keyword>
<keyword id="KW-0732">Signal</keyword>
<keyword id="KW-0813">Transport</keyword>
<evidence type="ECO:0000255" key="1">
    <source>
        <dbReference type="HAMAP-Rule" id="MF_01630"/>
    </source>
</evidence>
<gene>
    <name evidence="1" type="primary">napA</name>
    <name type="ordered locus">Reut_B4763</name>
</gene>
<protein>
    <recommendedName>
        <fullName evidence="1">Periplasmic nitrate reductase</fullName>
        <ecNumber evidence="1">1.9.6.1</ecNumber>
    </recommendedName>
</protein>
<reference key="1">
    <citation type="journal article" date="2010" name="PLoS ONE">
        <title>The complete multipartite genome sequence of Cupriavidus necator JMP134, a versatile pollutant degrader.</title>
        <authorList>
            <person name="Lykidis A."/>
            <person name="Perez-Pantoja D."/>
            <person name="Ledger T."/>
            <person name="Mavromatis K."/>
            <person name="Anderson I.J."/>
            <person name="Ivanova N.N."/>
            <person name="Hooper S.D."/>
            <person name="Lapidus A."/>
            <person name="Lucas S."/>
            <person name="Gonzalez B."/>
            <person name="Kyrpides N.C."/>
        </authorList>
    </citation>
    <scope>NUCLEOTIDE SEQUENCE [LARGE SCALE GENOMIC DNA]</scope>
    <source>
        <strain>JMP134 / LMG 1197</strain>
    </source>
</reference>
<organism>
    <name type="scientific">Cupriavidus pinatubonensis (strain JMP 134 / LMG 1197)</name>
    <name type="common">Cupriavidus necator (strain JMP 134)</name>
    <dbReference type="NCBI Taxonomy" id="264198"/>
    <lineage>
        <taxon>Bacteria</taxon>
        <taxon>Pseudomonadati</taxon>
        <taxon>Pseudomonadota</taxon>
        <taxon>Betaproteobacteria</taxon>
        <taxon>Burkholderiales</taxon>
        <taxon>Burkholderiaceae</taxon>
        <taxon>Cupriavidus</taxon>
    </lineage>
</organism>
<sequence length="831" mass="93762">MKVSRRDFIKQTAIAATASVAGIPLGTEAANFVTDSEVTKLKWSKAPCRFCGTGCGVTVAVRDNKVVATQGDPQCEVNKGLNCVKGYFLSKIMYGQDRLTKPLLRMKNGKYDKNGEFAPVTWDQAFDEMERQFKRVLKEKGPTAVGMFGSGQWTVWEGYAASKLYKAGFRSNNIDPNARHCMASAVQGFMRTFGMDEPMGCYDDFEAADAFVLWGSNMAEMHPILWTRITDRRLSHPKTRVAVLSTFTHRSFDLADIPIIFTPQTDLAMLNYIANYIIQNNKVNKDFVNKHTVFKEGVTEIGYGLRPDHPLQKAAKNAANPGDSKPITFDDFAKFVSKYDADYVSKLSGVPKDKLRQLAELYADPNVKVMSLWTMGFNQHTRGSWVNNMVYNVHLLTGKIATPGNSPFSLTGQPSACGTAREVGTFSHRLPADMVVTNPKHREEAERIWKLPPGTIVEKPGYHAVLQNRMLRDGKLNAYWVQVNNNMQAAANIMEEALPGYRNPANFIVVSDAYPTVTALSADLILPSAMWVEKEGAYGNAERRTQFWHQLVDAPGDARSDLWQLMEFSKRFKVEEVWPAELVAKKPEYKGKTLFDVLYRNGQVDKFPIKEVSTEYHNAEAQAFGFYVQKGLFEEYASFGRGHGHDLAPFDRYHEERGLRWPVVNGKETRWRYREGSDPYVKAGTGFQFYGNPDGKAVIFALPYEPPPESPDKEYPFWLATGRVLEHWHSGSMTRRVPELYRAFPNAVVFMHPEDAKAMGLRRGVEVEVVSRRGRMRSRVETRGRDAPPRGLVFVPWFDASQLINKVTLDATCPISLQTDYKKCAVKIVKV</sequence>
<name>NAPA_CUPPJ</name>
<feature type="signal peptide" description="Tat-type signal" evidence="1">
    <location>
        <begin position="1"/>
        <end position="29"/>
    </location>
</feature>
<feature type="chain" id="PRO_0000045997" description="Periplasmic nitrate reductase" evidence="1">
    <location>
        <begin position="30"/>
        <end position="831"/>
    </location>
</feature>
<feature type="domain" description="4Fe-4S Mo/W bis-MGD-type" evidence="1">
    <location>
        <begin position="41"/>
        <end position="97"/>
    </location>
</feature>
<feature type="binding site" evidence="1">
    <location>
        <position position="48"/>
    </location>
    <ligand>
        <name>[4Fe-4S] cluster</name>
        <dbReference type="ChEBI" id="CHEBI:49883"/>
    </ligand>
</feature>
<feature type="binding site" evidence="1">
    <location>
        <position position="51"/>
    </location>
    <ligand>
        <name>[4Fe-4S] cluster</name>
        <dbReference type="ChEBI" id="CHEBI:49883"/>
    </ligand>
</feature>
<feature type="binding site" evidence="1">
    <location>
        <position position="55"/>
    </location>
    <ligand>
        <name>[4Fe-4S] cluster</name>
        <dbReference type="ChEBI" id="CHEBI:49883"/>
    </ligand>
</feature>
<feature type="binding site" evidence="1">
    <location>
        <position position="83"/>
    </location>
    <ligand>
        <name>[4Fe-4S] cluster</name>
        <dbReference type="ChEBI" id="CHEBI:49883"/>
    </ligand>
</feature>
<feature type="binding site" evidence="1">
    <location>
        <position position="85"/>
    </location>
    <ligand>
        <name>Mo-bis(molybdopterin guanine dinucleotide)</name>
        <dbReference type="ChEBI" id="CHEBI:60539"/>
    </ligand>
</feature>
<feature type="binding site" evidence="1">
    <location>
        <position position="152"/>
    </location>
    <ligand>
        <name>Mo-bis(molybdopterin guanine dinucleotide)</name>
        <dbReference type="ChEBI" id="CHEBI:60539"/>
    </ligand>
</feature>
<feature type="binding site" evidence="1">
    <location>
        <position position="177"/>
    </location>
    <ligand>
        <name>Mo-bis(molybdopterin guanine dinucleotide)</name>
        <dbReference type="ChEBI" id="CHEBI:60539"/>
    </ligand>
</feature>
<feature type="binding site" evidence="1">
    <location>
        <position position="181"/>
    </location>
    <ligand>
        <name>Mo-bis(molybdopterin guanine dinucleotide)</name>
        <dbReference type="ChEBI" id="CHEBI:60539"/>
    </ligand>
</feature>
<feature type="binding site" evidence="1">
    <location>
        <begin position="214"/>
        <end position="221"/>
    </location>
    <ligand>
        <name>Mo-bis(molybdopterin guanine dinucleotide)</name>
        <dbReference type="ChEBI" id="CHEBI:60539"/>
    </ligand>
</feature>
<feature type="binding site" evidence="1">
    <location>
        <begin position="245"/>
        <end position="249"/>
    </location>
    <ligand>
        <name>Mo-bis(molybdopterin guanine dinucleotide)</name>
        <dbReference type="ChEBI" id="CHEBI:60539"/>
    </ligand>
</feature>
<feature type="binding site" evidence="1">
    <location>
        <begin position="264"/>
        <end position="266"/>
    </location>
    <ligand>
        <name>Mo-bis(molybdopterin guanine dinucleotide)</name>
        <dbReference type="ChEBI" id="CHEBI:60539"/>
    </ligand>
</feature>
<feature type="binding site" evidence="1">
    <location>
        <position position="375"/>
    </location>
    <ligand>
        <name>Mo-bis(molybdopterin guanine dinucleotide)</name>
        <dbReference type="ChEBI" id="CHEBI:60539"/>
    </ligand>
</feature>
<feature type="binding site" evidence="1">
    <location>
        <position position="379"/>
    </location>
    <ligand>
        <name>Mo-bis(molybdopterin guanine dinucleotide)</name>
        <dbReference type="ChEBI" id="CHEBI:60539"/>
    </ligand>
</feature>
<feature type="binding site" evidence="1">
    <location>
        <position position="485"/>
    </location>
    <ligand>
        <name>Mo-bis(molybdopterin guanine dinucleotide)</name>
        <dbReference type="ChEBI" id="CHEBI:60539"/>
    </ligand>
</feature>
<feature type="binding site" evidence="1">
    <location>
        <begin position="511"/>
        <end position="512"/>
    </location>
    <ligand>
        <name>Mo-bis(molybdopterin guanine dinucleotide)</name>
        <dbReference type="ChEBI" id="CHEBI:60539"/>
    </ligand>
</feature>
<feature type="binding site" evidence="1">
    <location>
        <position position="534"/>
    </location>
    <ligand>
        <name>Mo-bis(molybdopterin guanine dinucleotide)</name>
        <dbReference type="ChEBI" id="CHEBI:60539"/>
    </ligand>
</feature>
<feature type="binding site" evidence="1">
    <location>
        <position position="561"/>
    </location>
    <ligand>
        <name>Mo-bis(molybdopterin guanine dinucleotide)</name>
        <dbReference type="ChEBI" id="CHEBI:60539"/>
    </ligand>
</feature>
<feature type="binding site" evidence="1">
    <location>
        <begin position="721"/>
        <end position="730"/>
    </location>
    <ligand>
        <name>Mo-bis(molybdopterin guanine dinucleotide)</name>
        <dbReference type="ChEBI" id="CHEBI:60539"/>
    </ligand>
</feature>
<feature type="binding site" evidence="1">
    <location>
        <position position="797"/>
    </location>
    <ligand>
        <name>substrate</name>
    </ligand>
</feature>
<feature type="binding site" evidence="1">
    <location>
        <position position="805"/>
    </location>
    <ligand>
        <name>Mo-bis(molybdopterin guanine dinucleotide)</name>
        <dbReference type="ChEBI" id="CHEBI:60539"/>
    </ligand>
</feature>
<feature type="binding site" evidence="1">
    <location>
        <position position="822"/>
    </location>
    <ligand>
        <name>Mo-bis(molybdopterin guanine dinucleotide)</name>
        <dbReference type="ChEBI" id="CHEBI:60539"/>
    </ligand>
</feature>
<accession>Q46RX3</accession>
<dbReference type="EC" id="1.9.6.1" evidence="1"/>
<dbReference type="EMBL" id="CP000091">
    <property type="protein sequence ID" value="AAZ64111.1"/>
    <property type="molecule type" value="Genomic_DNA"/>
</dbReference>
<dbReference type="SMR" id="Q46RX3"/>
<dbReference type="STRING" id="264198.Reut_B4763"/>
<dbReference type="KEGG" id="reu:Reut_B4763"/>
<dbReference type="eggNOG" id="COG0243">
    <property type="taxonomic scope" value="Bacteria"/>
</dbReference>
<dbReference type="HOGENOM" id="CLU_000422_13_4_4"/>
<dbReference type="OrthoDB" id="7376058at2"/>
<dbReference type="GO" id="GO:0016020">
    <property type="term" value="C:membrane"/>
    <property type="evidence" value="ECO:0007669"/>
    <property type="project" value="TreeGrafter"/>
</dbReference>
<dbReference type="GO" id="GO:0009325">
    <property type="term" value="C:nitrate reductase complex"/>
    <property type="evidence" value="ECO:0007669"/>
    <property type="project" value="TreeGrafter"/>
</dbReference>
<dbReference type="GO" id="GO:0042597">
    <property type="term" value="C:periplasmic space"/>
    <property type="evidence" value="ECO:0007669"/>
    <property type="project" value="UniProtKB-SubCell"/>
</dbReference>
<dbReference type="GO" id="GO:0051539">
    <property type="term" value="F:4 iron, 4 sulfur cluster binding"/>
    <property type="evidence" value="ECO:0007669"/>
    <property type="project" value="UniProtKB-KW"/>
</dbReference>
<dbReference type="GO" id="GO:0009055">
    <property type="term" value="F:electron transfer activity"/>
    <property type="evidence" value="ECO:0007669"/>
    <property type="project" value="UniProtKB-UniRule"/>
</dbReference>
<dbReference type="GO" id="GO:0005506">
    <property type="term" value="F:iron ion binding"/>
    <property type="evidence" value="ECO:0007669"/>
    <property type="project" value="UniProtKB-UniRule"/>
</dbReference>
<dbReference type="GO" id="GO:0030151">
    <property type="term" value="F:molybdenum ion binding"/>
    <property type="evidence" value="ECO:0007669"/>
    <property type="project" value="InterPro"/>
</dbReference>
<dbReference type="GO" id="GO:0043546">
    <property type="term" value="F:molybdopterin cofactor binding"/>
    <property type="evidence" value="ECO:0007669"/>
    <property type="project" value="InterPro"/>
</dbReference>
<dbReference type="GO" id="GO:0050140">
    <property type="term" value="F:nitrate reductase (cytochrome) activity"/>
    <property type="evidence" value="ECO:0007669"/>
    <property type="project" value="UniProtKB-EC"/>
</dbReference>
<dbReference type="GO" id="GO:0045333">
    <property type="term" value="P:cellular respiration"/>
    <property type="evidence" value="ECO:0007669"/>
    <property type="project" value="UniProtKB-ARBA"/>
</dbReference>
<dbReference type="GO" id="GO:0006777">
    <property type="term" value="P:Mo-molybdopterin cofactor biosynthetic process"/>
    <property type="evidence" value="ECO:0007669"/>
    <property type="project" value="UniProtKB-UniRule"/>
</dbReference>
<dbReference type="GO" id="GO:0042128">
    <property type="term" value="P:nitrate assimilation"/>
    <property type="evidence" value="ECO:0007669"/>
    <property type="project" value="UniProtKB-UniRule"/>
</dbReference>
<dbReference type="CDD" id="cd02791">
    <property type="entry name" value="MopB_CT_Nitrate-R-NapA-like"/>
    <property type="match status" value="1"/>
</dbReference>
<dbReference type="CDD" id="cd02754">
    <property type="entry name" value="MopB_Nitrate-R-NapA-like"/>
    <property type="match status" value="1"/>
</dbReference>
<dbReference type="FunFam" id="2.40.40.20:FF:000005">
    <property type="entry name" value="Periplasmic nitrate reductase"/>
    <property type="match status" value="1"/>
</dbReference>
<dbReference type="Gene3D" id="2.40.40.20">
    <property type="match status" value="1"/>
</dbReference>
<dbReference type="Gene3D" id="3.30.200.210">
    <property type="match status" value="1"/>
</dbReference>
<dbReference type="Gene3D" id="3.40.50.740">
    <property type="match status" value="1"/>
</dbReference>
<dbReference type="Gene3D" id="3.40.228.10">
    <property type="entry name" value="Dimethylsulfoxide Reductase, domain 2"/>
    <property type="match status" value="1"/>
</dbReference>
<dbReference type="HAMAP" id="MF_01630">
    <property type="entry name" value="Nitrate_reduct_NapA"/>
    <property type="match status" value="1"/>
</dbReference>
<dbReference type="InterPro" id="IPR009010">
    <property type="entry name" value="Asp_de-COase-like_dom_sf"/>
</dbReference>
<dbReference type="InterPro" id="IPR041957">
    <property type="entry name" value="CT_Nitrate-R-NapA-like"/>
</dbReference>
<dbReference type="InterPro" id="IPR006657">
    <property type="entry name" value="MoPterin_dinucl-bd_dom"/>
</dbReference>
<dbReference type="InterPro" id="IPR006656">
    <property type="entry name" value="Mopterin_OxRdtase"/>
</dbReference>
<dbReference type="InterPro" id="IPR006963">
    <property type="entry name" value="Mopterin_OxRdtase_4Fe-4S_dom"/>
</dbReference>
<dbReference type="InterPro" id="IPR027467">
    <property type="entry name" value="MopterinOxRdtase_cofactor_BS"/>
</dbReference>
<dbReference type="InterPro" id="IPR010051">
    <property type="entry name" value="Periplasm_NO3_reductase_lsu"/>
</dbReference>
<dbReference type="InterPro" id="IPR050123">
    <property type="entry name" value="Prok_molybdopt-oxidoreductase"/>
</dbReference>
<dbReference type="InterPro" id="IPR006311">
    <property type="entry name" value="TAT_signal"/>
</dbReference>
<dbReference type="InterPro" id="IPR019546">
    <property type="entry name" value="TAT_signal_bac_arc"/>
</dbReference>
<dbReference type="NCBIfam" id="TIGR01706">
    <property type="entry name" value="NAPA"/>
    <property type="match status" value="1"/>
</dbReference>
<dbReference type="NCBIfam" id="NF010055">
    <property type="entry name" value="PRK13532.1"/>
    <property type="match status" value="1"/>
</dbReference>
<dbReference type="NCBIfam" id="TIGR01409">
    <property type="entry name" value="TAT_signal_seq"/>
    <property type="match status" value="1"/>
</dbReference>
<dbReference type="PANTHER" id="PTHR43105:SF11">
    <property type="entry name" value="PERIPLASMIC NITRATE REDUCTASE"/>
    <property type="match status" value="1"/>
</dbReference>
<dbReference type="PANTHER" id="PTHR43105">
    <property type="entry name" value="RESPIRATORY NITRATE REDUCTASE"/>
    <property type="match status" value="1"/>
</dbReference>
<dbReference type="Pfam" id="PF04879">
    <property type="entry name" value="Molybdop_Fe4S4"/>
    <property type="match status" value="1"/>
</dbReference>
<dbReference type="Pfam" id="PF00384">
    <property type="entry name" value="Molybdopterin"/>
    <property type="match status" value="1"/>
</dbReference>
<dbReference type="Pfam" id="PF01568">
    <property type="entry name" value="Molydop_binding"/>
    <property type="match status" value="1"/>
</dbReference>
<dbReference type="SMART" id="SM00926">
    <property type="entry name" value="Molybdop_Fe4S4"/>
    <property type="match status" value="1"/>
</dbReference>
<dbReference type="SUPFAM" id="SSF50692">
    <property type="entry name" value="ADC-like"/>
    <property type="match status" value="1"/>
</dbReference>
<dbReference type="SUPFAM" id="SSF53706">
    <property type="entry name" value="Formate dehydrogenase/DMSO reductase, domains 1-3"/>
    <property type="match status" value="1"/>
</dbReference>
<dbReference type="PROSITE" id="PS51669">
    <property type="entry name" value="4FE4S_MOW_BIS_MGD"/>
    <property type="match status" value="1"/>
</dbReference>
<dbReference type="PROSITE" id="PS00551">
    <property type="entry name" value="MOLYBDOPTERIN_PROK_1"/>
    <property type="match status" value="1"/>
</dbReference>
<dbReference type="PROSITE" id="PS51318">
    <property type="entry name" value="TAT"/>
    <property type="match status" value="1"/>
</dbReference>